<sequence>MSNIILDLQLACADLQGLPAEGDFLRWLEAVLPRFRDEAEVTIRLVDEAESHELNLTYRGKDRPTNVLSFPFEAPPGIELPLLGDMVICRQVVEREAQEQNISQLSHWAHMVVHGSLHLLGYDHISDEEAEEMESLEAEIMQVLGYPDPYAAEKESD</sequence>
<gene>
    <name evidence="1" type="primary">ybeY</name>
    <name type="ordered locus">NT01EI_2926</name>
</gene>
<proteinExistence type="inferred from homology"/>
<dbReference type="EC" id="3.1.-.-" evidence="1"/>
<dbReference type="EMBL" id="CP001600">
    <property type="protein sequence ID" value="ACR70080.1"/>
    <property type="molecule type" value="Genomic_DNA"/>
</dbReference>
<dbReference type="RefSeq" id="WP_015872174.1">
    <property type="nucleotide sequence ID" value="NZ_CP169062.1"/>
</dbReference>
<dbReference type="SMR" id="C5BGB7"/>
<dbReference type="STRING" id="67780.B6E78_06540"/>
<dbReference type="GeneID" id="69539810"/>
<dbReference type="KEGG" id="eic:NT01EI_2926"/>
<dbReference type="PATRIC" id="fig|634503.3.peg.2613"/>
<dbReference type="HOGENOM" id="CLU_106710_0_1_6"/>
<dbReference type="OrthoDB" id="9807740at2"/>
<dbReference type="Proteomes" id="UP000001485">
    <property type="component" value="Chromosome"/>
</dbReference>
<dbReference type="GO" id="GO:0005737">
    <property type="term" value="C:cytoplasm"/>
    <property type="evidence" value="ECO:0007669"/>
    <property type="project" value="UniProtKB-SubCell"/>
</dbReference>
<dbReference type="GO" id="GO:0004222">
    <property type="term" value="F:metalloendopeptidase activity"/>
    <property type="evidence" value="ECO:0007669"/>
    <property type="project" value="InterPro"/>
</dbReference>
<dbReference type="GO" id="GO:0004521">
    <property type="term" value="F:RNA endonuclease activity"/>
    <property type="evidence" value="ECO:0007669"/>
    <property type="project" value="UniProtKB-UniRule"/>
</dbReference>
<dbReference type="GO" id="GO:0008270">
    <property type="term" value="F:zinc ion binding"/>
    <property type="evidence" value="ECO:0007669"/>
    <property type="project" value="UniProtKB-UniRule"/>
</dbReference>
<dbReference type="GO" id="GO:0006364">
    <property type="term" value="P:rRNA processing"/>
    <property type="evidence" value="ECO:0007669"/>
    <property type="project" value="UniProtKB-UniRule"/>
</dbReference>
<dbReference type="Gene3D" id="3.40.390.30">
    <property type="entry name" value="Metalloproteases ('zincins'), catalytic domain"/>
    <property type="match status" value="1"/>
</dbReference>
<dbReference type="HAMAP" id="MF_00009">
    <property type="entry name" value="Endoribonucl_YbeY"/>
    <property type="match status" value="1"/>
</dbReference>
<dbReference type="InterPro" id="IPR023091">
    <property type="entry name" value="MetalPrtase_cat_dom_sf_prd"/>
</dbReference>
<dbReference type="InterPro" id="IPR002036">
    <property type="entry name" value="YbeY"/>
</dbReference>
<dbReference type="InterPro" id="IPR020549">
    <property type="entry name" value="YbeY_CS"/>
</dbReference>
<dbReference type="NCBIfam" id="TIGR00043">
    <property type="entry name" value="rRNA maturation RNase YbeY"/>
    <property type="match status" value="1"/>
</dbReference>
<dbReference type="PANTHER" id="PTHR46986">
    <property type="entry name" value="ENDORIBONUCLEASE YBEY, CHLOROPLASTIC"/>
    <property type="match status" value="1"/>
</dbReference>
<dbReference type="PANTHER" id="PTHR46986:SF1">
    <property type="entry name" value="ENDORIBONUCLEASE YBEY, CHLOROPLASTIC"/>
    <property type="match status" value="1"/>
</dbReference>
<dbReference type="Pfam" id="PF02130">
    <property type="entry name" value="YbeY"/>
    <property type="match status" value="1"/>
</dbReference>
<dbReference type="SUPFAM" id="SSF55486">
    <property type="entry name" value="Metalloproteases ('zincins'), catalytic domain"/>
    <property type="match status" value="1"/>
</dbReference>
<dbReference type="PROSITE" id="PS01306">
    <property type="entry name" value="UPF0054"/>
    <property type="match status" value="1"/>
</dbReference>
<reference key="1">
    <citation type="submission" date="2009-03" db="EMBL/GenBank/DDBJ databases">
        <title>Complete genome sequence of Edwardsiella ictaluri 93-146.</title>
        <authorList>
            <person name="Williams M.L."/>
            <person name="Gillaspy A.F."/>
            <person name="Dyer D.W."/>
            <person name="Thune R.L."/>
            <person name="Waldbieser G.C."/>
            <person name="Schuster S.C."/>
            <person name="Gipson J."/>
            <person name="Zaitshik J."/>
            <person name="Landry C."/>
            <person name="Lawrence M.L."/>
        </authorList>
    </citation>
    <scope>NUCLEOTIDE SEQUENCE [LARGE SCALE GENOMIC DNA]</scope>
    <source>
        <strain>93-146</strain>
    </source>
</reference>
<feature type="chain" id="PRO_1000201732" description="Endoribonuclease YbeY">
    <location>
        <begin position="1"/>
        <end position="157"/>
    </location>
</feature>
<feature type="binding site" evidence="1">
    <location>
        <position position="114"/>
    </location>
    <ligand>
        <name>Zn(2+)</name>
        <dbReference type="ChEBI" id="CHEBI:29105"/>
        <note>catalytic</note>
    </ligand>
</feature>
<feature type="binding site" evidence="1">
    <location>
        <position position="118"/>
    </location>
    <ligand>
        <name>Zn(2+)</name>
        <dbReference type="ChEBI" id="CHEBI:29105"/>
        <note>catalytic</note>
    </ligand>
</feature>
<feature type="binding site" evidence="1">
    <location>
        <position position="124"/>
    </location>
    <ligand>
        <name>Zn(2+)</name>
        <dbReference type="ChEBI" id="CHEBI:29105"/>
        <note>catalytic</note>
    </ligand>
</feature>
<comment type="function">
    <text evidence="1">Single strand-specific metallo-endoribonuclease involved in late-stage 70S ribosome quality control and in maturation of the 3' terminus of the 16S rRNA.</text>
</comment>
<comment type="cofactor">
    <cofactor evidence="1">
        <name>Zn(2+)</name>
        <dbReference type="ChEBI" id="CHEBI:29105"/>
    </cofactor>
    <text evidence="1">Binds 1 zinc ion.</text>
</comment>
<comment type="subcellular location">
    <subcellularLocation>
        <location evidence="1">Cytoplasm</location>
    </subcellularLocation>
</comment>
<comment type="similarity">
    <text evidence="1">Belongs to the endoribonuclease YbeY family.</text>
</comment>
<protein>
    <recommendedName>
        <fullName evidence="1">Endoribonuclease YbeY</fullName>
        <ecNumber evidence="1">3.1.-.-</ecNumber>
    </recommendedName>
</protein>
<keyword id="KW-0963">Cytoplasm</keyword>
<keyword id="KW-0255">Endonuclease</keyword>
<keyword id="KW-0378">Hydrolase</keyword>
<keyword id="KW-0479">Metal-binding</keyword>
<keyword id="KW-0540">Nuclease</keyword>
<keyword id="KW-0690">Ribosome biogenesis</keyword>
<keyword id="KW-0698">rRNA processing</keyword>
<keyword id="KW-0862">Zinc</keyword>
<accession>C5BGB7</accession>
<organism>
    <name type="scientific">Edwardsiella ictaluri (strain 93-146)</name>
    <dbReference type="NCBI Taxonomy" id="634503"/>
    <lineage>
        <taxon>Bacteria</taxon>
        <taxon>Pseudomonadati</taxon>
        <taxon>Pseudomonadota</taxon>
        <taxon>Gammaproteobacteria</taxon>
        <taxon>Enterobacterales</taxon>
        <taxon>Hafniaceae</taxon>
        <taxon>Edwardsiella</taxon>
    </lineage>
</organism>
<name>YBEY_EDWI9</name>
<evidence type="ECO:0000255" key="1">
    <source>
        <dbReference type="HAMAP-Rule" id="MF_00009"/>
    </source>
</evidence>